<reference key="1">
    <citation type="journal article" date="1999" name="Genetics">
        <title>Divergence of the hyperthermophilic archaea Pyrococcus furiosus and P. horikoshii inferred from complete genomic sequences.</title>
        <authorList>
            <person name="Maeder D.L."/>
            <person name="Weiss R.B."/>
            <person name="Dunn D.M."/>
            <person name="Cherry J.L."/>
            <person name="Gonzalez J.M."/>
            <person name="DiRuggiero J."/>
            <person name="Robb F.T."/>
        </authorList>
    </citation>
    <scope>NUCLEOTIDE SEQUENCE [LARGE SCALE GENOMIC DNA]</scope>
    <source>
        <strain>ATCC 43587 / DSM 3638 / JCM 8422 / Vc1</strain>
    </source>
</reference>
<reference key="2">
    <citation type="journal article" date="1994" name="J. Bacteriol.">
        <title>Sulfide dehydrogenase from the hyperthermophilic archaeon Pyrococcus furiosus: a new multifunctional enzyme involved in the reduction of elemental sulfur.</title>
        <authorList>
            <person name="Ma K."/>
            <person name="Adams M.W."/>
        </authorList>
    </citation>
    <scope>PROTEIN SEQUENCE OF 5-24</scope>
    <scope>FUNCTION</scope>
    <scope>CATALYTIC ACTIVITY</scope>
    <scope>COFACTOR</scope>
    <scope>SUBSTRATE SPECIFICITY</scope>
    <scope>BIOPHYSICOCHEMICAL PROPERTIES</scope>
    <scope>SUBUNIT</scope>
    <scope>SUBCELLULAR LOCATION</scope>
    <source>
        <strain evidence="4">ATCC 43587 / DSM 3638 / JCM 8422 / Vc1</strain>
    </source>
</reference>
<reference key="3">
    <citation type="journal article" date="2000" name="J. Biol. Inorg. Chem.">
        <title>Novel structure and redox chemistry of the prosthetic groups of the iron-sulfur flavoprotein sulfide dehydrogenase from Pyrococcus furiosus; evidence for a [2Fe-2S] cluster with Asp(Cys)3 ligands.</title>
        <authorList>
            <person name="Hagen W.R."/>
            <person name="Silva P.J."/>
            <person name="Amorim M.A."/>
            <person name="Hagedoorn P.L."/>
            <person name="Wassink H."/>
            <person name="Haaker H."/>
            <person name="Robb F.T."/>
        </authorList>
    </citation>
    <scope>FUNCTION</scope>
    <scope>COFACTOR</scope>
    <scope>EPR SPECTROSCOPY</scope>
    <source>
        <strain evidence="3">ATCC 43587 / DSM 3638 / JCM 8422 / Vc1</strain>
    </source>
</reference>
<reference key="4">
    <citation type="journal article" date="2001" name="Methods Enzymol.">
        <title>Ferredoxin:NADP oxidoreductase from Pyrococcus furiosus.</title>
        <authorList>
            <person name="Ma K."/>
            <person name="Adams M.W."/>
        </authorList>
    </citation>
    <scope>FUNCTION</scope>
    <scope>CATALYTIC ACTIVITY</scope>
    <scope>SUBSTRATE SPECIFICITY</scope>
    <scope>BIOPHYSICOCHEMICAL PROPERTIES</scope>
    <scope>SUBUNIT</scope>
    <source>
        <strain evidence="5">ATCC 43587 / DSM 3638 / JCM 8422 / Vc1</strain>
    </source>
</reference>
<proteinExistence type="evidence at protein level"/>
<sequence>MFKILRKERLAPGINLFEIESPRIAKHAKPGQFVMIRLHEKGERIPLTIADVDISKGSITIVAQEVGKTTRELGTYEAGDYILDVLGPLGKPSHIDYFGTVVMIGGGVGVAEIYPVAKAMKEKGNYVISILGFRTKDLVFWEDKLRSVSDEVIVTTNDGSYGMKGFTTHALQKLIEEGRKIDLVHAVGPAIMMKAVAELTKPYGIKTVASLNPIMVDGTGMCGACRVTVGGEVKFACVDGPEFDAHLVDWDQLMNRLAYYRDLEKISLEKWERERRMV</sequence>
<comment type="function">
    <text evidence="3 4 5">A bifunctional enzyme that catalyzes the reduction of elemental sulfur or polysulfide to hydrogen sulfide with NADPH as electron donor. Also functions as a reduced ferredoxin:NADP oxidoreductase with a very high affinity for reduced ferredoxin. Exhibits a broad specificity for various physiological and non-physiological substrates with varied reduction potentials such as methyl viologen, benzyl viologen, FAD, FMN, methylene blue, 2,6-dichlorophenolindophenol (DCIP), cytochrome C and ferricyanide with highest preference for benzyl viologen. Does not reduce fumarate, succinate, nitrate, nitrite, sulfate, sulfite or protons. Does not possess any hydrogenase activity or NADPH-dependent glutamate synthase activity.</text>
</comment>
<comment type="catalytic activity">
    <reaction evidence="4 5">
        <text>n sulfur + hydrogen sulfide + NADP(+) = (n+1) sulfur + NADPH</text>
        <dbReference type="Rhea" id="RHEA:38451"/>
        <dbReference type="ChEBI" id="CHEBI:26833"/>
        <dbReference type="ChEBI" id="CHEBI:29919"/>
        <dbReference type="ChEBI" id="CHEBI:57783"/>
        <dbReference type="ChEBI" id="CHEBI:58349"/>
        <dbReference type="EC" id="1.8.1.19"/>
    </reaction>
</comment>
<comment type="catalytic activity">
    <reaction evidence="4 5">
        <text>2 reduced [2Fe-2S]-[ferredoxin] + NADP(+) + H(+) = 2 oxidized [2Fe-2S]-[ferredoxin] + NADPH</text>
        <dbReference type="Rhea" id="RHEA:20125"/>
        <dbReference type="Rhea" id="RHEA-COMP:10000"/>
        <dbReference type="Rhea" id="RHEA-COMP:10001"/>
        <dbReference type="ChEBI" id="CHEBI:15378"/>
        <dbReference type="ChEBI" id="CHEBI:33737"/>
        <dbReference type="ChEBI" id="CHEBI:33738"/>
        <dbReference type="ChEBI" id="CHEBI:57783"/>
        <dbReference type="ChEBI" id="CHEBI:58349"/>
        <dbReference type="EC" id="1.18.1.2"/>
    </reaction>
</comment>
<comment type="cofactor">
    <cofactor evidence="3 4">
        <name>FAD</name>
        <dbReference type="ChEBI" id="CHEBI:57692"/>
    </cofactor>
    <text evidence="3 4">Binds 1 FAD per subunit.</text>
</comment>
<comment type="cofactor">
    <cofactor evidence="3 4">
        <name>[2Fe-2S] cluster</name>
        <dbReference type="ChEBI" id="CHEBI:190135"/>
    </cofactor>
    <text evidence="3 4">Binds 1 [2Fe-2S] cluster.</text>
</comment>
<comment type="biophysicochemical properties">
    <kinetics>
        <KM evidence="4 5">11 uM for NADPH (with benzyl viologen as cosubstrate at pH 9.5)</KM>
        <KM evidence="4 5">71 uM for NADH (with benzyl viologen as cosubstrate at pH 9.5)</KM>
        <KM evidence="4 5">1.25 mM for polysulfide (with NADPH as cosubstrate at pH 8.0)</KM>
        <KM evidence="4 5">125 uM for benzyl viologen (with NADPH as cosubstrate at pH 9.5)</KM>
        <KM evidence="4 5">0.7 uM for reduced ferredoxin (with NADP as cosubstrate at pH 8.0)</KM>
        <KM evidence="4 5">1.6 uM for rubredoxin (with NADPH as cosubstrate at pH 8.0)</KM>
        <KM evidence="4 5">240 uM for oxygen (with NADPH as cosubstrate at pH 10.2)</KM>
        <KM evidence="4 5">11 uM for NADPH (with benzyl viologen as cosubstrate at 80 degrees Celsius)</KM>
        <KM evidence="4 5">71 uM for NADH (with benzyl viologen as cosubstrate at 80 degrees Celsius)</KM>
        <KM evidence="4 5">1.25 mM for polysulfide (with NADPH as cosubstrate at 80 degrees Celsius)</KM>
        <KM evidence="4 5">125 uM for benzyl viologen (with NADPH as cosubstrate at 80 degrees Celsius)</KM>
        <KM evidence="4 5">1.6 uM for rubredoxin (with NADPH as cosubstrate at 80 degrees Celsius)</KM>
        <KM evidence="4 5">240 uM for oxygen (with NADPH as cosubstrate at 80 degrees Celsius)</KM>
        <KM evidence="4 5">0.7 uM for reduced ferredoxin (with NADP as cosubstrate at 80 degrees Celsius)</KM>
        <Vmax evidence="4 5">263.0 umol/min/mg enzyme with NADPH as substrate</Vmax>
        <Vmax evidence="4 5">182.0 umol/min/mg enzyme with NADH as substrate</Vmax>
        <Vmax evidence="4 5">14.0 umol/min/mg enzyme with polysulfide as substrate</Vmax>
        <Vmax evidence="4 5">278.0 umol/min/mg enzyme with benzyl viologen as substrate</Vmax>
        <Vmax evidence="4 5">8.0 umol/min/mg enzyme with reduced ferredoxin as substrate</Vmax>
        <Vmax evidence="4 5">1.0 umol/min/mg enzyme with rubredoxin as substrate</Vmax>
        <Vmax evidence="4 5">166.0 umol/min/mg enzyme with oxygen as substrate</Vmax>
        <text evidence="4">Measured for the whole complex.</text>
    </kinetics>
    <phDependence>
        <text evidence="4 5">Optimum pH is 8.0 (for polysulfide as substrate) and 10.3 (for benzyl viologen as substrate).</text>
    </phDependence>
    <temperatureDependence>
        <text evidence="4 5">Optimum temperature is 80 degrees Celsius. Has a half-life of 12 h at 95 degrees Celsius. Activity increases by 50% after incubation for several hours at 82 degrees Celsius.</text>
    </temperatureDependence>
</comment>
<comment type="subunit">
    <text evidence="4 5">Heterodimer of alpha and beta subunits.</text>
</comment>
<comment type="subcellular location">
    <subcellularLocation>
        <location evidence="4">Cytoplasm</location>
    </subcellularLocation>
</comment>
<gene>
    <name evidence="6" type="primary">sudB</name>
    <name type="ordered locus">PF1327</name>
</gene>
<dbReference type="EC" id="1.8.1.19" evidence="4 5"/>
<dbReference type="EC" id="1.18.1.2" evidence="4 5"/>
<dbReference type="EMBL" id="AE009950">
    <property type="protein sequence ID" value="AAL81452.1"/>
    <property type="molecule type" value="Genomic_DNA"/>
</dbReference>
<dbReference type="RefSeq" id="WP_011012474.1">
    <property type="nucleotide sequence ID" value="NC_003413.1"/>
</dbReference>
<dbReference type="PDB" id="5JCA">
    <property type="method" value="X-ray"/>
    <property type="resolution" value="1.50 A"/>
    <property type="chains" value="S=1-278"/>
</dbReference>
<dbReference type="PDB" id="5JFC">
    <property type="method" value="X-ray"/>
    <property type="resolution" value="1.60 A"/>
    <property type="chains" value="S=1-278"/>
</dbReference>
<dbReference type="PDBsum" id="5JCA"/>
<dbReference type="PDBsum" id="5JFC"/>
<dbReference type="SMR" id="Q8U194"/>
<dbReference type="STRING" id="186497.PF1328"/>
<dbReference type="PaxDb" id="186497-PF1328"/>
<dbReference type="GeneID" id="1469203"/>
<dbReference type="KEGG" id="pfu:PF1328"/>
<dbReference type="PATRIC" id="fig|186497.12.peg.1391"/>
<dbReference type="eggNOG" id="arCOG02199">
    <property type="taxonomic scope" value="Archaea"/>
</dbReference>
<dbReference type="HOGENOM" id="CLU_003827_1_0_2"/>
<dbReference type="OrthoDB" id="35401at2157"/>
<dbReference type="PhylomeDB" id="Q8U194"/>
<dbReference type="BRENDA" id="1.6.1.4">
    <property type="organism ID" value="5243"/>
</dbReference>
<dbReference type="BRENDA" id="1.8.1.19">
    <property type="organism ID" value="5243"/>
</dbReference>
<dbReference type="Proteomes" id="UP000001013">
    <property type="component" value="Chromosome"/>
</dbReference>
<dbReference type="GO" id="GO:0005737">
    <property type="term" value="C:cytoplasm"/>
    <property type="evidence" value="ECO:0007669"/>
    <property type="project" value="UniProtKB-SubCell"/>
</dbReference>
<dbReference type="GO" id="GO:0051537">
    <property type="term" value="F:2 iron, 2 sulfur cluster binding"/>
    <property type="evidence" value="ECO:0007669"/>
    <property type="project" value="UniProtKB-KW"/>
</dbReference>
<dbReference type="GO" id="GO:0004324">
    <property type="term" value="F:ferredoxin-NADP+ reductase activity"/>
    <property type="evidence" value="ECO:0007669"/>
    <property type="project" value="UniProtKB-EC"/>
</dbReference>
<dbReference type="GO" id="GO:0050660">
    <property type="term" value="F:flavin adenine dinucleotide binding"/>
    <property type="evidence" value="ECO:0007669"/>
    <property type="project" value="InterPro"/>
</dbReference>
<dbReference type="GO" id="GO:0046872">
    <property type="term" value="F:metal ion binding"/>
    <property type="evidence" value="ECO:0007669"/>
    <property type="project" value="UniProtKB-KW"/>
</dbReference>
<dbReference type="GO" id="GO:0006221">
    <property type="term" value="P:pyrimidine nucleotide biosynthetic process"/>
    <property type="evidence" value="ECO:0007669"/>
    <property type="project" value="InterPro"/>
</dbReference>
<dbReference type="CDD" id="cd06219">
    <property type="entry name" value="DHOD_e_trans_like1"/>
    <property type="match status" value="1"/>
</dbReference>
<dbReference type="Gene3D" id="3.40.50.80">
    <property type="entry name" value="Nucleotide-binding domain of ferredoxin-NADP reductase (FNR) module"/>
    <property type="match status" value="1"/>
</dbReference>
<dbReference type="Gene3D" id="2.40.30.10">
    <property type="entry name" value="Translation factors"/>
    <property type="match status" value="1"/>
</dbReference>
<dbReference type="InterPro" id="IPR012165">
    <property type="entry name" value="Cyt_c3_hydrogenase_gsu"/>
</dbReference>
<dbReference type="InterPro" id="IPR019480">
    <property type="entry name" value="Dihydroorotate_DH_Fe-S-bd"/>
</dbReference>
<dbReference type="InterPro" id="IPR017927">
    <property type="entry name" value="FAD-bd_FR_type"/>
</dbReference>
<dbReference type="InterPro" id="IPR039261">
    <property type="entry name" value="FNR_nucleotide-bd"/>
</dbReference>
<dbReference type="InterPro" id="IPR050353">
    <property type="entry name" value="PyrK_electron_transfer"/>
</dbReference>
<dbReference type="InterPro" id="IPR017938">
    <property type="entry name" value="Riboflavin_synthase-like_b-brl"/>
</dbReference>
<dbReference type="NCBIfam" id="NF004862">
    <property type="entry name" value="PRK06222.1"/>
    <property type="match status" value="1"/>
</dbReference>
<dbReference type="PANTHER" id="PTHR43513">
    <property type="entry name" value="DIHYDROOROTATE DEHYDROGENASE B (NAD(+)), ELECTRON TRANSFER SUBUNIT"/>
    <property type="match status" value="1"/>
</dbReference>
<dbReference type="PANTHER" id="PTHR43513:SF3">
    <property type="entry name" value="DIHYDROOROTATE DEHYDROGENASE B (NAD(+)), ELECTRON TRANSFER SUBUNIT-RELATED"/>
    <property type="match status" value="1"/>
</dbReference>
<dbReference type="Pfam" id="PF10418">
    <property type="entry name" value="DHODB_Fe-S_bind"/>
    <property type="match status" value="1"/>
</dbReference>
<dbReference type="PIRSF" id="PIRSF006816">
    <property type="entry name" value="Cyc3_hyd_g"/>
    <property type="match status" value="1"/>
</dbReference>
<dbReference type="SUPFAM" id="SSF52343">
    <property type="entry name" value="Ferredoxin reductase-like, C-terminal NADP-linked domain"/>
    <property type="match status" value="1"/>
</dbReference>
<dbReference type="SUPFAM" id="SSF63380">
    <property type="entry name" value="Riboflavin synthase domain-like"/>
    <property type="match status" value="1"/>
</dbReference>
<dbReference type="PROSITE" id="PS51384">
    <property type="entry name" value="FAD_FR"/>
    <property type="match status" value="1"/>
</dbReference>
<accession>Q8U194</accession>
<accession>Q9UWJ3</accession>
<keyword id="KW-0001">2Fe-2S</keyword>
<keyword id="KW-0002">3D-structure</keyword>
<keyword id="KW-0963">Cytoplasm</keyword>
<keyword id="KW-0903">Direct protein sequencing</keyword>
<keyword id="KW-0274">FAD</keyword>
<keyword id="KW-0285">Flavoprotein</keyword>
<keyword id="KW-0408">Iron</keyword>
<keyword id="KW-0411">Iron-sulfur</keyword>
<keyword id="KW-0479">Metal-binding</keyword>
<keyword id="KW-0521">NADP</keyword>
<keyword id="KW-0560">Oxidoreductase</keyword>
<keyword id="KW-1185">Reference proteome</keyword>
<feature type="propeptide" id="PRO_0000420431" evidence="4">
    <location>
        <begin position="1"/>
        <end position="4"/>
    </location>
</feature>
<feature type="chain" id="PRO_0000420432" description="Sulfide dehydrogenase subunit beta" evidence="4">
    <location>
        <begin position="5"/>
        <end position="278"/>
    </location>
</feature>
<feature type="domain" description="FAD-binding FR-type" evidence="2">
    <location>
        <begin position="1"/>
        <end position="95"/>
    </location>
</feature>
<feature type="binding site" evidence="1">
    <location>
        <position position="222"/>
    </location>
    <ligand>
        <name>[2Fe-2S] cluster</name>
        <dbReference type="ChEBI" id="CHEBI:190135"/>
    </ligand>
</feature>
<feature type="binding site" evidence="1">
    <location>
        <position position="225"/>
    </location>
    <ligand>
        <name>[2Fe-2S] cluster</name>
        <dbReference type="ChEBI" id="CHEBI:190135"/>
    </ligand>
</feature>
<feature type="binding site" evidence="1">
    <location>
        <position position="237"/>
    </location>
    <ligand>
        <name>[2Fe-2S] cluster</name>
        <dbReference type="ChEBI" id="CHEBI:190135"/>
    </ligand>
</feature>
<feature type="strand" evidence="9">
    <location>
        <begin position="2"/>
        <end position="11"/>
    </location>
</feature>
<feature type="strand" evidence="9">
    <location>
        <begin position="14"/>
        <end position="20"/>
    </location>
</feature>
<feature type="helix" evidence="9">
    <location>
        <begin position="22"/>
        <end position="27"/>
    </location>
</feature>
<feature type="strand" evidence="9">
    <location>
        <begin position="33"/>
        <end position="37"/>
    </location>
</feature>
<feature type="strand" evidence="9">
    <location>
        <begin position="45"/>
        <end position="48"/>
    </location>
</feature>
<feature type="strand" evidence="9">
    <location>
        <begin position="51"/>
        <end position="53"/>
    </location>
</feature>
<feature type="turn" evidence="9">
    <location>
        <begin position="54"/>
        <end position="57"/>
    </location>
</feature>
<feature type="strand" evidence="9">
    <location>
        <begin position="58"/>
        <end position="64"/>
    </location>
</feature>
<feature type="helix" evidence="9">
    <location>
        <begin position="68"/>
        <end position="74"/>
    </location>
</feature>
<feature type="strand" evidence="9">
    <location>
        <begin position="81"/>
        <end position="90"/>
    </location>
</feature>
<feature type="strand" evidence="9">
    <location>
        <begin position="99"/>
        <end position="106"/>
    </location>
</feature>
<feature type="helix" evidence="9">
    <location>
        <begin position="109"/>
        <end position="122"/>
    </location>
</feature>
<feature type="strand" evidence="9">
    <location>
        <begin position="126"/>
        <end position="135"/>
    </location>
</feature>
<feature type="helix" evidence="9">
    <location>
        <begin position="136"/>
        <end position="138"/>
    </location>
</feature>
<feature type="helix" evidence="9">
    <location>
        <begin position="142"/>
        <end position="146"/>
    </location>
</feature>
<feature type="strand" evidence="9">
    <location>
        <begin position="150"/>
        <end position="156"/>
    </location>
</feature>
<feature type="strand" evidence="9">
    <location>
        <begin position="159"/>
        <end position="165"/>
    </location>
</feature>
<feature type="helix" evidence="9">
    <location>
        <begin position="167"/>
        <end position="176"/>
    </location>
</feature>
<feature type="strand" evidence="9">
    <location>
        <begin position="182"/>
        <end position="188"/>
    </location>
</feature>
<feature type="helix" evidence="9">
    <location>
        <begin position="190"/>
        <end position="200"/>
    </location>
</feature>
<feature type="helix" evidence="9">
    <location>
        <begin position="201"/>
        <end position="203"/>
    </location>
</feature>
<feature type="strand" evidence="9">
    <location>
        <begin position="207"/>
        <end position="210"/>
    </location>
</feature>
<feature type="strand" evidence="9">
    <location>
        <begin position="216"/>
        <end position="222"/>
    </location>
</feature>
<feature type="strand" evidence="9">
    <location>
        <begin position="226"/>
        <end position="229"/>
    </location>
</feature>
<feature type="strand" evidence="9">
    <location>
        <begin position="232"/>
        <end position="235"/>
    </location>
</feature>
<feature type="helix" evidence="9">
    <location>
        <begin position="236"/>
        <end position="239"/>
    </location>
</feature>
<feature type="strand" evidence="9">
    <location>
        <begin position="241"/>
        <end position="244"/>
    </location>
</feature>
<feature type="helix" evidence="9">
    <location>
        <begin position="245"/>
        <end position="247"/>
    </location>
</feature>
<feature type="helix" evidence="9">
    <location>
        <begin position="250"/>
        <end position="257"/>
    </location>
</feature>
<feature type="turn" evidence="9">
    <location>
        <begin position="258"/>
        <end position="260"/>
    </location>
</feature>
<feature type="helix" evidence="9">
    <location>
        <begin position="261"/>
        <end position="273"/>
    </location>
</feature>
<organism>
    <name type="scientific">Pyrococcus furiosus (strain ATCC 43587 / DSM 3638 / JCM 8422 / Vc1)</name>
    <dbReference type="NCBI Taxonomy" id="186497"/>
    <lineage>
        <taxon>Archaea</taxon>
        <taxon>Methanobacteriati</taxon>
        <taxon>Methanobacteriota</taxon>
        <taxon>Thermococci</taxon>
        <taxon>Thermococcales</taxon>
        <taxon>Thermococcaceae</taxon>
        <taxon>Pyrococcus</taxon>
    </lineage>
</organism>
<protein>
    <recommendedName>
        <fullName evidence="7">Sulfide dehydrogenase subunit beta</fullName>
        <shortName evidence="7">SuDH</shortName>
        <ecNumber evidence="4 5">1.8.1.19</ecNumber>
    </recommendedName>
    <alternativeName>
        <fullName evidence="8">Ferredoxin:NADP oxidoreductase</fullName>
        <shortName evidence="8">FNOR</shortName>
        <ecNumber evidence="4 5">1.18.1.2</ecNumber>
    </alternativeName>
</protein>
<name>SUDHB_PYRFU</name>
<evidence type="ECO:0000255" key="1"/>
<evidence type="ECO:0000255" key="2">
    <source>
        <dbReference type="PROSITE-ProRule" id="PRU00716"/>
    </source>
</evidence>
<evidence type="ECO:0000269" key="3">
    <source>
    </source>
</evidence>
<evidence type="ECO:0000269" key="4">
    <source>
    </source>
</evidence>
<evidence type="ECO:0000269" key="5">
    <source ref="4"/>
</evidence>
<evidence type="ECO:0000303" key="6">
    <source>
    </source>
</evidence>
<evidence type="ECO:0000303" key="7">
    <source>
    </source>
</evidence>
<evidence type="ECO:0000303" key="8">
    <source ref="4"/>
</evidence>
<evidence type="ECO:0007829" key="9">
    <source>
        <dbReference type="PDB" id="5JCA"/>
    </source>
</evidence>